<protein>
    <recommendedName>
        <fullName evidence="9">Sensor protein kinase WalK</fullName>
        <ecNumber evidence="1">2.7.13.3</ecNumber>
    </recommendedName>
</protein>
<sequence>MKWLKQLQSLHTKLVIVYVLLIIIGMQIIGLYFTNSLEKELLDNFKKNITQYAKQLDVNIEKVYKDKDKGSVNAQKDIQDLLNEYANRQEIGEIRFIDKDQIIMATTKQSNRGLINQKVNDGSVQKALSLGQTNDHMVLKDYGSGKERVWVYNIPVKVDKQTIGDIYIESKINDVYNQLNNINQIFIVGTAISLFITVILGFFIARTITKPITDMRNQTVEMSKGNYTQRVKIYGNDEIGELALAFNNLSKRVQEAQANTESEKRRLDSVITHMSDGILATDRRGRVRIANDMALKMLGLAKEDVIGYYMLGVLNLENEFSLEEIQENSDSFLLDINEEEGIIARVNFSTIVQETGFVTGYIAVLHDVTEQQQVERERREFVANVSHELRTPLTSMNSYIEALEEGAWQDKELAPSFLSVTREETERMIRLVNDLLQLSKMDNESDQITKEIIDFNMFINKIINRHEMAAKDTTFVREIPQQTIFAEIDPDKMTQVFDNVITNAMKYSRGEKRVEFHVKQNALYNRMTIRIKDNGIGIPINKVDKIFDRFYRVDKARTRKMGGTGLGLAISKEIVEAHNGRIWANSVEGQGTSIFITLPCEIIEDGDWDE</sequence>
<accession>Q8CU87</accession>
<accession>Q5G1P4</accession>
<comment type="function">
    <text evidence="2 8">Member of the two-component regulatory system WalK/WalR that regulates genes involved in autolysis and cell wall metabolism. WalK functions as a sensor protein kinase which is autophosphorylated at a histidine residue and transfers its phosphate group to WalR.</text>
</comment>
<comment type="catalytic activity">
    <reaction evidence="1">
        <text>ATP + protein L-histidine = ADP + protein N-phospho-L-histidine.</text>
        <dbReference type="EC" id="2.7.13.3"/>
    </reaction>
</comment>
<comment type="activity regulation">
    <text evidence="8">ATPase activity is inhibited by derivatives of thiazolidinone, benzamide and furan in vitro.</text>
</comment>
<comment type="subcellular location">
    <subcellularLocation>
        <location evidence="9">Cell membrane</location>
        <topology evidence="3">Multi-pass membrane protein</topology>
    </subcellularLocation>
</comment>
<comment type="PTM">
    <text evidence="2">Autophosphorylated.</text>
</comment>
<feature type="chain" id="PRO_0000353065" description="Sensor protein kinase WalK">
    <location>
        <begin position="1"/>
        <end position="610"/>
    </location>
</feature>
<feature type="transmembrane region" description="Helical" evidence="3">
    <location>
        <begin position="14"/>
        <end position="34"/>
    </location>
</feature>
<feature type="transmembrane region" description="Helical" evidence="3">
    <location>
        <begin position="185"/>
        <end position="205"/>
    </location>
</feature>
<feature type="domain" description="HAMP" evidence="4">
    <location>
        <begin position="206"/>
        <end position="258"/>
    </location>
</feature>
<feature type="domain" description="PAS" evidence="6">
    <location>
        <begin position="263"/>
        <end position="334"/>
    </location>
</feature>
<feature type="domain" description="PAC" evidence="7">
    <location>
        <begin position="327"/>
        <end position="380"/>
    </location>
</feature>
<feature type="domain" description="Histidine kinase" evidence="5">
    <location>
        <begin position="384"/>
        <end position="602"/>
    </location>
</feature>
<feature type="modified residue" description="Phosphohistidine; by autocatalysis" evidence="5">
    <location>
        <position position="387"/>
    </location>
</feature>
<name>WALK_STAES</name>
<proteinExistence type="evidence at protein level"/>
<organism>
    <name type="scientific">Staphylococcus epidermidis (strain ATCC 12228 / FDA PCI 1200)</name>
    <dbReference type="NCBI Taxonomy" id="176280"/>
    <lineage>
        <taxon>Bacteria</taxon>
        <taxon>Bacillati</taxon>
        <taxon>Bacillota</taxon>
        <taxon>Bacilli</taxon>
        <taxon>Bacillales</taxon>
        <taxon>Staphylococcaceae</taxon>
        <taxon>Staphylococcus</taxon>
    </lineage>
</organism>
<keyword id="KW-0067">ATP-binding</keyword>
<keyword id="KW-1003">Cell membrane</keyword>
<keyword id="KW-0418">Kinase</keyword>
<keyword id="KW-0472">Membrane</keyword>
<keyword id="KW-0547">Nucleotide-binding</keyword>
<keyword id="KW-0597">Phosphoprotein</keyword>
<keyword id="KW-0808">Transferase</keyword>
<keyword id="KW-0812">Transmembrane</keyword>
<keyword id="KW-1133">Transmembrane helix</keyword>
<keyword id="KW-0902">Two-component regulatory system</keyword>
<reference key="1">
    <citation type="journal article" date="2006" name="BMC Microbiol.">
        <title>Structure-based discovery of inhibitors of the YycG histidine kinase: new chemical leads to combat Staphylococcus epidermidis infections.</title>
        <authorList>
            <person name="Qin Z.-Q."/>
            <person name="Zhang J."/>
            <person name="Xu B."/>
            <person name="Chen L."/>
            <person name="Wu Y."/>
            <person name="Yang X."/>
            <person name="Shen X."/>
            <person name="Molin S."/>
            <person name="Danchin A."/>
            <person name="Jiang H."/>
            <person name="Qu D."/>
        </authorList>
    </citation>
    <scope>NUCLEOTIDE SEQUENCE [GENOMIC DNA]</scope>
    <scope>FUNCTION IN REGULATING CELL WALL METABOLISM</scope>
    <scope>ACTIVITY REGULATION</scope>
</reference>
<reference key="2">
    <citation type="journal article" date="2003" name="Mol. Microbiol.">
        <title>Genome-based analysis of virulence genes in a non-biofilm-forming Staphylococcus epidermidis strain (ATCC 12228).</title>
        <authorList>
            <person name="Zhang Y.-Q."/>
            <person name="Ren S.-X."/>
            <person name="Li H.-L."/>
            <person name="Wang Y.-X."/>
            <person name="Fu G."/>
            <person name="Yang J."/>
            <person name="Qin Z.-Q."/>
            <person name="Miao Y.-G."/>
            <person name="Wang W.-Y."/>
            <person name="Chen R.-S."/>
            <person name="Shen Y."/>
            <person name="Chen Z."/>
            <person name="Yuan Z.-H."/>
            <person name="Zhao G.-P."/>
            <person name="Qu D."/>
            <person name="Danchin A."/>
            <person name="Wen Y.-M."/>
        </authorList>
    </citation>
    <scope>NUCLEOTIDE SEQUENCE [LARGE SCALE GENOMIC DNA]</scope>
    <source>
        <strain>ATCC 12228 / FDA PCI 1200</strain>
    </source>
</reference>
<evidence type="ECO:0000250" key="1">
    <source>
        <dbReference type="UniProtKB" id="O34206"/>
    </source>
</evidence>
<evidence type="ECO:0000250" key="2">
    <source>
        <dbReference type="UniProtKB" id="Q2G2U4"/>
    </source>
</evidence>
<evidence type="ECO:0000255" key="3"/>
<evidence type="ECO:0000255" key="4">
    <source>
        <dbReference type="PROSITE-ProRule" id="PRU00102"/>
    </source>
</evidence>
<evidence type="ECO:0000255" key="5">
    <source>
        <dbReference type="PROSITE-ProRule" id="PRU00107"/>
    </source>
</evidence>
<evidence type="ECO:0000255" key="6">
    <source>
        <dbReference type="PROSITE-ProRule" id="PRU00140"/>
    </source>
</evidence>
<evidence type="ECO:0000255" key="7">
    <source>
        <dbReference type="PROSITE-ProRule" id="PRU00141"/>
    </source>
</evidence>
<evidence type="ECO:0000269" key="8">
    <source>
    </source>
</evidence>
<evidence type="ECO:0000305" key="9"/>
<gene>
    <name type="primary">walK</name>
    <name type="synonym">yycG</name>
    <name type="ordered locus">SE_0019</name>
</gene>
<dbReference type="EC" id="2.7.13.3" evidence="1"/>
<dbReference type="EMBL" id="AY864800">
    <property type="protein sequence ID" value="AAW62232.1"/>
    <property type="molecule type" value="Genomic_DNA"/>
</dbReference>
<dbReference type="EMBL" id="AE015929">
    <property type="protein sequence ID" value="AAO03616.1"/>
    <property type="molecule type" value="Genomic_DNA"/>
</dbReference>
<dbReference type="RefSeq" id="NP_763574.1">
    <property type="nucleotide sequence ID" value="NC_004461.1"/>
</dbReference>
<dbReference type="RefSeq" id="WP_002437327.1">
    <property type="nucleotide sequence ID" value="NZ_WBME01000012.1"/>
</dbReference>
<dbReference type="SMR" id="Q8CU87"/>
<dbReference type="GeneID" id="50017435"/>
<dbReference type="KEGG" id="sep:SE_0019"/>
<dbReference type="PATRIC" id="fig|176280.10.peg.19"/>
<dbReference type="eggNOG" id="COG5002">
    <property type="taxonomic scope" value="Bacteria"/>
</dbReference>
<dbReference type="HOGENOM" id="CLU_000445_89_2_9"/>
<dbReference type="OrthoDB" id="9813151at2"/>
<dbReference type="Proteomes" id="UP000001411">
    <property type="component" value="Chromosome"/>
</dbReference>
<dbReference type="GO" id="GO:0005886">
    <property type="term" value="C:plasma membrane"/>
    <property type="evidence" value="ECO:0007669"/>
    <property type="project" value="UniProtKB-SubCell"/>
</dbReference>
<dbReference type="GO" id="GO:0005524">
    <property type="term" value="F:ATP binding"/>
    <property type="evidence" value="ECO:0007669"/>
    <property type="project" value="UniProtKB-KW"/>
</dbReference>
<dbReference type="GO" id="GO:0000156">
    <property type="term" value="F:phosphorelay response regulator activity"/>
    <property type="evidence" value="ECO:0007669"/>
    <property type="project" value="TreeGrafter"/>
</dbReference>
<dbReference type="GO" id="GO:0000155">
    <property type="term" value="F:phosphorelay sensor kinase activity"/>
    <property type="evidence" value="ECO:0007669"/>
    <property type="project" value="InterPro"/>
</dbReference>
<dbReference type="GO" id="GO:0030295">
    <property type="term" value="F:protein kinase activator activity"/>
    <property type="evidence" value="ECO:0007669"/>
    <property type="project" value="TreeGrafter"/>
</dbReference>
<dbReference type="GO" id="GO:0007234">
    <property type="term" value="P:osmosensory signaling via phosphorelay pathway"/>
    <property type="evidence" value="ECO:0007669"/>
    <property type="project" value="TreeGrafter"/>
</dbReference>
<dbReference type="GO" id="GO:0006355">
    <property type="term" value="P:regulation of DNA-templated transcription"/>
    <property type="evidence" value="ECO:0007669"/>
    <property type="project" value="InterPro"/>
</dbReference>
<dbReference type="CDD" id="cd06225">
    <property type="entry name" value="HAMP"/>
    <property type="match status" value="1"/>
</dbReference>
<dbReference type="CDD" id="cd00075">
    <property type="entry name" value="HATPase"/>
    <property type="match status" value="1"/>
</dbReference>
<dbReference type="CDD" id="cd00082">
    <property type="entry name" value="HisKA"/>
    <property type="match status" value="1"/>
</dbReference>
<dbReference type="CDD" id="cd00130">
    <property type="entry name" value="PAS"/>
    <property type="match status" value="1"/>
</dbReference>
<dbReference type="FunFam" id="1.10.8.500:FF:000001">
    <property type="entry name" value="Cell wall metabolism sensor histidine kinase"/>
    <property type="match status" value="1"/>
</dbReference>
<dbReference type="FunFam" id="3.30.565.10:FF:000006">
    <property type="entry name" value="Sensor histidine kinase WalK"/>
    <property type="match status" value="1"/>
</dbReference>
<dbReference type="FunFam" id="1.10.287.130:FF:000001">
    <property type="entry name" value="Two-component sensor histidine kinase"/>
    <property type="match status" value="1"/>
</dbReference>
<dbReference type="Gene3D" id="1.10.287.130">
    <property type="match status" value="1"/>
</dbReference>
<dbReference type="Gene3D" id="1.10.8.500">
    <property type="entry name" value="HAMP domain in histidine kinase"/>
    <property type="match status" value="1"/>
</dbReference>
<dbReference type="Gene3D" id="3.30.565.10">
    <property type="entry name" value="Histidine kinase-like ATPase, C-terminal domain"/>
    <property type="match status" value="1"/>
</dbReference>
<dbReference type="Gene3D" id="3.30.450.20">
    <property type="entry name" value="PAS domain"/>
    <property type="match status" value="2"/>
</dbReference>
<dbReference type="InterPro" id="IPR003660">
    <property type="entry name" value="HAMP_dom"/>
</dbReference>
<dbReference type="InterPro" id="IPR036890">
    <property type="entry name" value="HATPase_C_sf"/>
</dbReference>
<dbReference type="InterPro" id="IPR005467">
    <property type="entry name" value="His_kinase_dom"/>
</dbReference>
<dbReference type="InterPro" id="IPR003661">
    <property type="entry name" value="HisK_dim/P_dom"/>
</dbReference>
<dbReference type="InterPro" id="IPR036097">
    <property type="entry name" value="HisK_dim/P_sf"/>
</dbReference>
<dbReference type="InterPro" id="IPR052545">
    <property type="entry name" value="Light-responsive_reg"/>
</dbReference>
<dbReference type="InterPro" id="IPR000014">
    <property type="entry name" value="PAS"/>
</dbReference>
<dbReference type="InterPro" id="IPR000700">
    <property type="entry name" value="PAS-assoc_C"/>
</dbReference>
<dbReference type="InterPro" id="IPR035965">
    <property type="entry name" value="PAS-like_dom_sf"/>
</dbReference>
<dbReference type="InterPro" id="IPR013767">
    <property type="entry name" value="PAS_fold"/>
</dbReference>
<dbReference type="InterPro" id="IPR049814">
    <property type="entry name" value="Resp_reg_WalK"/>
</dbReference>
<dbReference type="InterPro" id="IPR029151">
    <property type="entry name" value="Sensor-like_sf"/>
</dbReference>
<dbReference type="InterPro" id="IPR004358">
    <property type="entry name" value="Sig_transdc_His_kin-like_C"/>
</dbReference>
<dbReference type="NCBIfam" id="NF033092">
    <property type="entry name" value="HK_WalK"/>
    <property type="match status" value="1"/>
</dbReference>
<dbReference type="NCBIfam" id="TIGR00229">
    <property type="entry name" value="sensory_box"/>
    <property type="match status" value="1"/>
</dbReference>
<dbReference type="PANTHER" id="PTHR42878:SF7">
    <property type="entry name" value="SENSOR HISTIDINE KINASE GLRK"/>
    <property type="match status" value="1"/>
</dbReference>
<dbReference type="PANTHER" id="PTHR42878">
    <property type="entry name" value="TWO-COMPONENT HISTIDINE KINASE"/>
    <property type="match status" value="1"/>
</dbReference>
<dbReference type="Pfam" id="PF23846">
    <property type="entry name" value="Cache_WalK"/>
    <property type="match status" value="1"/>
</dbReference>
<dbReference type="Pfam" id="PF00672">
    <property type="entry name" value="HAMP"/>
    <property type="match status" value="1"/>
</dbReference>
<dbReference type="Pfam" id="PF02518">
    <property type="entry name" value="HATPase_c"/>
    <property type="match status" value="1"/>
</dbReference>
<dbReference type="Pfam" id="PF00512">
    <property type="entry name" value="HisKA"/>
    <property type="match status" value="1"/>
</dbReference>
<dbReference type="Pfam" id="PF00989">
    <property type="entry name" value="PAS"/>
    <property type="match status" value="1"/>
</dbReference>
<dbReference type="PRINTS" id="PR00344">
    <property type="entry name" value="BCTRLSENSOR"/>
</dbReference>
<dbReference type="SMART" id="SM00304">
    <property type="entry name" value="HAMP"/>
    <property type="match status" value="1"/>
</dbReference>
<dbReference type="SMART" id="SM00387">
    <property type="entry name" value="HATPase_c"/>
    <property type="match status" value="1"/>
</dbReference>
<dbReference type="SMART" id="SM00388">
    <property type="entry name" value="HisKA"/>
    <property type="match status" value="1"/>
</dbReference>
<dbReference type="SMART" id="SM00091">
    <property type="entry name" value="PAS"/>
    <property type="match status" value="1"/>
</dbReference>
<dbReference type="SUPFAM" id="SSF55874">
    <property type="entry name" value="ATPase domain of HSP90 chaperone/DNA topoisomerase II/histidine kinase"/>
    <property type="match status" value="1"/>
</dbReference>
<dbReference type="SUPFAM" id="SSF158472">
    <property type="entry name" value="HAMP domain-like"/>
    <property type="match status" value="1"/>
</dbReference>
<dbReference type="SUPFAM" id="SSF47384">
    <property type="entry name" value="Homodimeric domain of signal transducing histidine kinase"/>
    <property type="match status" value="1"/>
</dbReference>
<dbReference type="SUPFAM" id="SSF55785">
    <property type="entry name" value="PYP-like sensor domain (PAS domain)"/>
    <property type="match status" value="1"/>
</dbReference>
<dbReference type="SUPFAM" id="SSF103190">
    <property type="entry name" value="Sensory domain-like"/>
    <property type="match status" value="1"/>
</dbReference>
<dbReference type="PROSITE" id="PS50885">
    <property type="entry name" value="HAMP"/>
    <property type="match status" value="1"/>
</dbReference>
<dbReference type="PROSITE" id="PS50109">
    <property type="entry name" value="HIS_KIN"/>
    <property type="match status" value="1"/>
</dbReference>
<dbReference type="PROSITE" id="PS50113">
    <property type="entry name" value="PAC"/>
    <property type="match status" value="1"/>
</dbReference>
<dbReference type="PROSITE" id="PS50112">
    <property type="entry name" value="PAS"/>
    <property type="match status" value="1"/>
</dbReference>